<proteinExistence type="inferred from homology"/>
<accession>Q8TU67</accession>
<organism>
    <name type="scientific">Methanosarcina acetivorans (strain ATCC 35395 / DSM 2834 / JCM 12185 / C2A)</name>
    <dbReference type="NCBI Taxonomy" id="188937"/>
    <lineage>
        <taxon>Archaea</taxon>
        <taxon>Methanobacteriati</taxon>
        <taxon>Methanobacteriota</taxon>
        <taxon>Stenosarchaea group</taxon>
        <taxon>Methanomicrobia</taxon>
        <taxon>Methanosarcinales</taxon>
        <taxon>Methanosarcinaceae</taxon>
        <taxon>Methanosarcina</taxon>
    </lineage>
</organism>
<sequence length="356" mass="40165">MITKQQVLEFLKNYDLENITIATVCSHSSLQIFDGARKEGFRTLGICVGKPPKFYEAFPKAKPDEYLIVDSYSDIMNKVEELRKKNVIIIPHGSFVAYLGTENFAELTVPTFGNRAVLEWESDRDKEREWLLGAGIHMPGKIDDPRDINGPVMVKYDGAKGGKGFFVAKTYEEFDELVDRTQKYTIQEFITGTRYYLHYFYSPIRNEGYTLSEGSLELLSMDRRVESNADEIFRLGSPRELIEAGIRPTYVVTGNVPLVARESLLPLIFSLGERVVEESLGLFGGMIGAFCLETVFTDSLEIKVFEISARIVAGTNLYISGSPYADLIQEDLSTGRRIAQEIKEAVRTNQLDKIIS</sequence>
<protein>
    <recommendedName>
        <fullName evidence="2">5-formaminoimidazole-4-carboxamide-1-(beta)-D-ribofuranosyl 5'-monophosphate synthetase</fullName>
        <ecNumber evidence="2">6.3.4.23</ecNumber>
    </recommendedName>
    <alternativeName>
        <fullName evidence="2">5-aminoimidazole-4-carboxamide-1-beta-D-ribofuranosyl 5'-monophosphate--formate ligase</fullName>
    </alternativeName>
</protein>
<feature type="chain" id="PRO_0000348625" description="5-formaminoimidazole-4-carboxamide-1-(beta)-D-ribofuranosyl 5'-monophosphate synthetase">
    <location>
        <begin position="1"/>
        <end position="356"/>
    </location>
</feature>
<feature type="domain" description="ATP-grasp" evidence="2">
    <location>
        <begin position="101"/>
        <end position="333"/>
    </location>
</feature>
<feature type="binding site" evidence="2">
    <location>
        <position position="27"/>
    </location>
    <ligand>
        <name>5-amino-1-(5-phospho-beta-D-ribosyl)imidazole-4-carboxamide</name>
        <dbReference type="ChEBI" id="CHEBI:58475"/>
    </ligand>
</feature>
<feature type="binding site" evidence="2">
    <location>
        <position position="94"/>
    </location>
    <ligand>
        <name>5-amino-1-(5-phospho-beta-D-ribosyl)imidazole-4-carboxamide</name>
        <dbReference type="ChEBI" id="CHEBI:58475"/>
    </ligand>
</feature>
<feature type="binding site" evidence="2">
    <location>
        <begin position="145"/>
        <end position="196"/>
    </location>
    <ligand>
        <name>ATP</name>
        <dbReference type="ChEBI" id="CHEBI:30616"/>
    </ligand>
</feature>
<feature type="binding site" evidence="2">
    <location>
        <position position="226"/>
    </location>
    <ligand>
        <name>ATP</name>
        <dbReference type="ChEBI" id="CHEBI:30616"/>
    </ligand>
</feature>
<feature type="binding site" evidence="2">
    <location>
        <position position="255"/>
    </location>
    <ligand>
        <name>5-amino-1-(5-phospho-beta-D-ribosyl)imidazole-4-carboxamide</name>
        <dbReference type="ChEBI" id="CHEBI:58475"/>
    </ligand>
</feature>
<feature type="binding site" evidence="2">
    <location>
        <position position="293"/>
    </location>
    <ligand>
        <name>Mg(2+)</name>
        <dbReference type="ChEBI" id="CHEBI:18420"/>
    </ligand>
</feature>
<feature type="binding site" evidence="2">
    <location>
        <position position="306"/>
    </location>
    <ligand>
        <name>Mg(2+)</name>
        <dbReference type="ChEBI" id="CHEBI:18420"/>
    </ligand>
</feature>
<evidence type="ECO:0000250" key="1"/>
<evidence type="ECO:0000255" key="2">
    <source>
        <dbReference type="HAMAP-Rule" id="MF_01163"/>
    </source>
</evidence>
<evidence type="ECO:0000305" key="3"/>
<name>PURP_METAC</name>
<reference key="1">
    <citation type="journal article" date="2002" name="Genome Res.">
        <title>The genome of Methanosarcina acetivorans reveals extensive metabolic and physiological diversity.</title>
        <authorList>
            <person name="Galagan J.E."/>
            <person name="Nusbaum C."/>
            <person name="Roy A."/>
            <person name="Endrizzi M.G."/>
            <person name="Macdonald P."/>
            <person name="FitzHugh W."/>
            <person name="Calvo S."/>
            <person name="Engels R."/>
            <person name="Smirnov S."/>
            <person name="Atnoor D."/>
            <person name="Brown A."/>
            <person name="Allen N."/>
            <person name="Naylor J."/>
            <person name="Stange-Thomann N."/>
            <person name="DeArellano K."/>
            <person name="Johnson R."/>
            <person name="Linton L."/>
            <person name="McEwan P."/>
            <person name="McKernan K."/>
            <person name="Talamas J."/>
            <person name="Tirrell A."/>
            <person name="Ye W."/>
            <person name="Zimmer A."/>
            <person name="Barber R.D."/>
            <person name="Cann I."/>
            <person name="Graham D.E."/>
            <person name="Grahame D.A."/>
            <person name="Guss A.M."/>
            <person name="Hedderich R."/>
            <person name="Ingram-Smith C."/>
            <person name="Kuettner H.C."/>
            <person name="Krzycki J.A."/>
            <person name="Leigh J.A."/>
            <person name="Li W."/>
            <person name="Liu J."/>
            <person name="Mukhopadhyay B."/>
            <person name="Reeve J.N."/>
            <person name="Smith K."/>
            <person name="Springer T.A."/>
            <person name="Umayam L.A."/>
            <person name="White O."/>
            <person name="White R.H."/>
            <person name="de Macario E.C."/>
            <person name="Ferry J.G."/>
            <person name="Jarrell K.F."/>
            <person name="Jing H."/>
            <person name="Macario A.J.L."/>
            <person name="Paulsen I.T."/>
            <person name="Pritchett M."/>
            <person name="Sowers K.R."/>
            <person name="Swanson R.V."/>
            <person name="Zinder S.H."/>
            <person name="Lander E."/>
            <person name="Metcalf W.W."/>
            <person name="Birren B."/>
        </authorList>
    </citation>
    <scope>NUCLEOTIDE SEQUENCE [LARGE SCALE GENOMIC DNA]</scope>
    <source>
        <strain>ATCC 35395 / DSM 2834 / JCM 12185 / C2A</strain>
    </source>
</reference>
<keyword id="KW-0067">ATP-binding</keyword>
<keyword id="KW-0436">Ligase</keyword>
<keyword id="KW-0460">Magnesium</keyword>
<keyword id="KW-0464">Manganese</keyword>
<keyword id="KW-0479">Metal-binding</keyword>
<keyword id="KW-0547">Nucleotide-binding</keyword>
<keyword id="KW-0658">Purine biosynthesis</keyword>
<keyword id="KW-1185">Reference proteome</keyword>
<comment type="function">
    <text evidence="2">Catalyzes the ATP- and formate-dependent formylation of 5-aminoimidazole-4-carboxamide-1-beta-d-ribofuranosyl 5'-monophosphate (AICAR) to 5-formaminoimidazole-4-carboxamide-1-beta-d-ribofuranosyl 5'-monophosphate (FAICAR) in the absence of folates.</text>
</comment>
<comment type="catalytic activity">
    <reaction evidence="2">
        <text>5-amino-1-(5-phospho-beta-D-ribosyl)imidazole-4-carboxamide + formate + ATP = 5-formamido-1-(5-phospho-D-ribosyl)imidazole-4-carboxamide + ADP + phosphate</text>
        <dbReference type="Rhea" id="RHEA:24836"/>
        <dbReference type="ChEBI" id="CHEBI:15740"/>
        <dbReference type="ChEBI" id="CHEBI:30616"/>
        <dbReference type="ChEBI" id="CHEBI:43474"/>
        <dbReference type="ChEBI" id="CHEBI:58467"/>
        <dbReference type="ChEBI" id="CHEBI:58475"/>
        <dbReference type="ChEBI" id="CHEBI:456216"/>
        <dbReference type="EC" id="6.3.4.23"/>
    </reaction>
</comment>
<comment type="cofactor">
    <cofactor evidence="1">
        <name>Mg(2+)</name>
        <dbReference type="ChEBI" id="CHEBI:18420"/>
    </cofactor>
    <cofactor evidence="1">
        <name>Mn(2+)</name>
        <dbReference type="ChEBI" id="CHEBI:29035"/>
    </cofactor>
    <text evidence="1">Binds 1 Mg(2+) or Mn(2+) ion per subunit.</text>
</comment>
<comment type="pathway">
    <text evidence="2">Purine metabolism; IMP biosynthesis via de novo pathway; 5-formamido-1-(5-phospho-D-ribosyl)imidazole-4-carboxamide from 5-amino-1-(5-phospho-D-ribosyl)imidazole-4-carboxamide (formate route): step 1/1.</text>
</comment>
<comment type="similarity">
    <text evidence="2">Belongs to the phosphohexose mutase family.</text>
</comment>
<comment type="sequence caution" evidence="3">
    <conflict type="erroneous initiation">
        <sequence resource="EMBL-CDS" id="AAM03659"/>
    </conflict>
</comment>
<dbReference type="EC" id="6.3.4.23" evidence="2"/>
<dbReference type="EMBL" id="AE010299">
    <property type="protein sequence ID" value="AAM03659.1"/>
    <property type="status" value="ALT_INIT"/>
    <property type="molecule type" value="Genomic_DNA"/>
</dbReference>
<dbReference type="RefSeq" id="WP_048064840.1">
    <property type="nucleotide sequence ID" value="NC_003552.1"/>
</dbReference>
<dbReference type="SMR" id="Q8TU67"/>
<dbReference type="STRING" id="188937.MA_0206"/>
<dbReference type="EnsemblBacteria" id="AAM03659">
    <property type="protein sequence ID" value="AAM03659"/>
    <property type="gene ID" value="MA_0206"/>
</dbReference>
<dbReference type="GeneID" id="1472098"/>
<dbReference type="KEGG" id="mac:MA_0206"/>
<dbReference type="HOGENOM" id="CLU_065084_0_0_2"/>
<dbReference type="InParanoid" id="Q8TU67"/>
<dbReference type="OrthoDB" id="98133at2157"/>
<dbReference type="PhylomeDB" id="Q8TU67"/>
<dbReference type="UniPathway" id="UPA00074">
    <property type="reaction ID" value="UER00134"/>
</dbReference>
<dbReference type="Proteomes" id="UP000002487">
    <property type="component" value="Chromosome"/>
</dbReference>
<dbReference type="GO" id="GO:0005524">
    <property type="term" value="F:ATP binding"/>
    <property type="evidence" value="ECO:0007669"/>
    <property type="project" value="UniProtKB-KW"/>
</dbReference>
<dbReference type="GO" id="GO:0016879">
    <property type="term" value="F:ligase activity, forming carbon-nitrogen bonds"/>
    <property type="evidence" value="ECO:0007669"/>
    <property type="project" value="UniProtKB-UniRule"/>
</dbReference>
<dbReference type="GO" id="GO:0000287">
    <property type="term" value="F:magnesium ion binding"/>
    <property type="evidence" value="ECO:0007669"/>
    <property type="project" value="InterPro"/>
</dbReference>
<dbReference type="GO" id="GO:0006189">
    <property type="term" value="P:'de novo' IMP biosynthetic process"/>
    <property type="evidence" value="ECO:0007669"/>
    <property type="project" value="UniProtKB-UniRule"/>
</dbReference>
<dbReference type="Gene3D" id="3.40.50.20">
    <property type="match status" value="1"/>
</dbReference>
<dbReference type="Gene3D" id="3.30.1490.20">
    <property type="entry name" value="ATP-grasp fold, A domain"/>
    <property type="match status" value="1"/>
</dbReference>
<dbReference type="Gene3D" id="3.30.470.20">
    <property type="entry name" value="ATP-grasp fold, B domain"/>
    <property type="match status" value="1"/>
</dbReference>
<dbReference type="HAMAP" id="MF_01163">
    <property type="entry name" value="IMP_biosynth_PurP"/>
    <property type="match status" value="1"/>
</dbReference>
<dbReference type="InterPro" id="IPR011761">
    <property type="entry name" value="ATP-grasp"/>
</dbReference>
<dbReference type="InterPro" id="IPR013815">
    <property type="entry name" value="ATP_grasp_subdomain_1"/>
</dbReference>
<dbReference type="InterPro" id="IPR023656">
    <property type="entry name" value="IMP_biosynth_PurP"/>
</dbReference>
<dbReference type="InterPro" id="IPR009720">
    <property type="entry name" value="IMP_biosynth_PurP_C"/>
</dbReference>
<dbReference type="InterPro" id="IPR010672">
    <property type="entry name" value="IMP_biosynth_PurP_N"/>
</dbReference>
<dbReference type="InterPro" id="IPR016185">
    <property type="entry name" value="PreATP-grasp_dom_sf"/>
</dbReference>
<dbReference type="NCBIfam" id="NF009781">
    <property type="entry name" value="PRK13278.1-6"/>
    <property type="match status" value="1"/>
</dbReference>
<dbReference type="PANTHER" id="PTHR38147:SF2">
    <property type="entry name" value="5-FORMAMINOIMIDAZOLE-4-CARBOXAMIDE-1-(BETA)-D-RIBOFURANOSYL 5'-MONOPHOSPHATE SYNTHETASE"/>
    <property type="match status" value="1"/>
</dbReference>
<dbReference type="PANTHER" id="PTHR38147">
    <property type="entry name" value="5-FORMAMINOIMIDAZOLE-4-CARBOXAMIDE-1-(BETA)-D-RIBOFURANOSYL 5'-MONOPHOSPHATE SYNTHETASE-RELATED"/>
    <property type="match status" value="1"/>
</dbReference>
<dbReference type="Pfam" id="PF06849">
    <property type="entry name" value="DUF1246"/>
    <property type="match status" value="1"/>
</dbReference>
<dbReference type="Pfam" id="PF06973">
    <property type="entry name" value="DUF1297"/>
    <property type="match status" value="1"/>
</dbReference>
<dbReference type="PIRSF" id="PIRSF004602">
    <property type="entry name" value="ATPgrasp_PurP"/>
    <property type="match status" value="1"/>
</dbReference>
<dbReference type="SUPFAM" id="SSF56059">
    <property type="entry name" value="Glutathione synthetase ATP-binding domain-like"/>
    <property type="match status" value="1"/>
</dbReference>
<dbReference type="SUPFAM" id="SSF52440">
    <property type="entry name" value="PreATP-grasp domain"/>
    <property type="match status" value="1"/>
</dbReference>
<dbReference type="PROSITE" id="PS50975">
    <property type="entry name" value="ATP_GRASP"/>
    <property type="match status" value="1"/>
</dbReference>
<gene>
    <name evidence="2" type="primary">purP</name>
    <name type="ordered locus">MA_0206</name>
</gene>